<sequence>MSSYVGVLVSDPWLQSQFTQVELRTLKSKFVSNKTQLGRFTVGDLPPVFEKLKAFNGTIDEDEIKSVLDKSYPNADDEVDFEFFLRAFLSVQARGVEKSGGSKGASSFLKTSTTTVHHAINESEKASYVSHVNNYLRDDPFLKSYLPIDPATNAFFDLVKDGVLLCKLINVAVPGTIDERAINTKKTLNPWERNENLTLGLNSAKAIGCTVVNIGTQDIAEGRPYLVLGLISQIIKIQMLADLNFKKTPSLFQLVDDTQDAEELMGLAPEKVLLKWMNFHLKKAGYEKQVTNFSSDLKDGEAYAYLLNALAPEHSTHVALETKDPTERAKKVLEQAEKLDCKRYLSPKDIVDGSANLNLAFVAQIFQHRNGLTVDDSKTSFAEMMTDDVETSREERCFRLWINSLGTATYVNNVFEDLRNGWVLLEVLDKVSPGSVNWKHANKPPIKMPFKKVENCNEVIKIGKELRFSLVNVAGNDIVQGNKKLLLAFLWQLMRYTMLQLLRNLRSHSQGKEITDADILNWANRKVKRGGRTSQADSFRDKNLSSGMFFLELLSAVEPRVVNWSLVTNGETEEDKKLNATYIISVARKLGCSIFLLPEDIIEVNQKMMLILAASIMYWSLQQQSDTESTVSEDATDDGDANSVAGEISNLSIDGASESSPTVQDQELLTKADNDEDEVDGENNKDA</sequence>
<feature type="chain" id="PRO_0000073754" description="Fimbrin-5">
    <location>
        <begin position="1"/>
        <end position="687"/>
    </location>
</feature>
<feature type="domain" description="EF-hand" evidence="4">
    <location>
        <begin position="7"/>
        <end position="74"/>
    </location>
</feature>
<feature type="domain" description="Calponin-homology (CH) 1" evidence="2">
    <location>
        <begin position="122"/>
        <end position="239"/>
    </location>
</feature>
<feature type="domain" description="Calponin-homology (CH) 2" evidence="2">
    <location>
        <begin position="267"/>
        <end position="370"/>
    </location>
</feature>
<feature type="domain" description="Calponin-homology (CH) 3" evidence="2">
    <location>
        <begin position="392"/>
        <end position="498"/>
    </location>
</feature>
<feature type="domain" description="Calponin-homology (CH) 4" evidence="2">
    <location>
        <begin position="513"/>
        <end position="621"/>
    </location>
</feature>
<feature type="region of interest" description="Actin-binding 1" evidence="3">
    <location>
        <begin position="122"/>
        <end position="370"/>
    </location>
</feature>
<feature type="region of interest" description="Actin-binding 2" evidence="3">
    <location>
        <begin position="392"/>
        <end position="621"/>
    </location>
</feature>
<feature type="region of interest" description="Disordered" evidence="5">
    <location>
        <begin position="628"/>
        <end position="687"/>
    </location>
</feature>
<feature type="compositionally biased region" description="Polar residues" evidence="5">
    <location>
        <begin position="649"/>
        <end position="667"/>
    </location>
</feature>
<organism>
    <name type="scientific">Arabidopsis thaliana</name>
    <name type="common">Mouse-ear cress</name>
    <dbReference type="NCBI Taxonomy" id="3702"/>
    <lineage>
        <taxon>Eukaryota</taxon>
        <taxon>Viridiplantae</taxon>
        <taxon>Streptophyta</taxon>
        <taxon>Embryophyta</taxon>
        <taxon>Tracheophyta</taxon>
        <taxon>Spermatophyta</taxon>
        <taxon>Magnoliopsida</taxon>
        <taxon>eudicotyledons</taxon>
        <taxon>Gunneridae</taxon>
        <taxon>Pentapetalae</taxon>
        <taxon>rosids</taxon>
        <taxon>malvids</taxon>
        <taxon>Brassicales</taxon>
        <taxon>Brassicaceae</taxon>
        <taxon>Camelineae</taxon>
        <taxon>Arabidopsis</taxon>
    </lineage>
</organism>
<protein>
    <recommendedName>
        <fullName evidence="8">Fimbrin-5</fullName>
        <shortName>AtFIM5</shortName>
    </recommendedName>
    <alternativeName>
        <fullName evidence="10">Fimbrin-like protein 2</fullName>
    </alternativeName>
    <alternativeName>
        <fullName evidence="7">Fimbrin5</fullName>
    </alternativeName>
</protein>
<evidence type="ECO:0000250" key="1">
    <source>
        <dbReference type="UniProtKB" id="Q7G188"/>
    </source>
</evidence>
<evidence type="ECO:0000255" key="2">
    <source>
        <dbReference type="PROSITE-ProRule" id="PRU00044"/>
    </source>
</evidence>
<evidence type="ECO:0000255" key="3">
    <source>
        <dbReference type="PROSITE-ProRule" id="PRU00300"/>
    </source>
</evidence>
<evidence type="ECO:0000255" key="4">
    <source>
        <dbReference type="PROSITE-ProRule" id="PRU00448"/>
    </source>
</evidence>
<evidence type="ECO:0000256" key="5">
    <source>
        <dbReference type="SAM" id="MobiDB-lite"/>
    </source>
</evidence>
<evidence type="ECO:0000269" key="6">
    <source>
    </source>
</evidence>
<evidence type="ECO:0000303" key="7">
    <source>
    </source>
</evidence>
<evidence type="ECO:0000305" key="8"/>
<evidence type="ECO:0000312" key="9">
    <source>
        <dbReference type="Araport" id="AT5G35700"/>
    </source>
</evidence>
<evidence type="ECO:0000312" key="10">
    <source>
        <dbReference type="EMBL" id="AED94007.1"/>
    </source>
</evidence>
<evidence type="ECO:0000312" key="11">
    <source>
        <dbReference type="EMBL" id="BAB09267.1"/>
    </source>
</evidence>
<gene>
    <name evidence="7" type="primary">FIM5</name>
    <name evidence="10" type="synonym">FIM2</name>
    <name evidence="9" type="ordered locus">At5g35700</name>
    <name evidence="11" type="ORF">MXH1.5</name>
</gene>
<keyword id="KW-0009">Actin-binding</keyword>
<keyword id="KW-0963">Cytoplasm</keyword>
<keyword id="KW-0206">Cytoskeleton</keyword>
<keyword id="KW-1185">Reference proteome</keyword>
<keyword id="KW-0677">Repeat</keyword>
<reference key="1">
    <citation type="journal article" date="1998" name="DNA Res.">
        <title>Structural analysis of Arabidopsis thaliana chromosome 5. V. Sequence features of the regions of 1,381,565 bp covered by twenty one physically assigned P1 and TAC clones.</title>
        <authorList>
            <person name="Kaneko T."/>
            <person name="Kotani H."/>
            <person name="Nakamura Y."/>
            <person name="Sato S."/>
            <person name="Asamizu E."/>
            <person name="Miyajima N."/>
            <person name="Tabata S."/>
        </authorList>
    </citation>
    <scope>NUCLEOTIDE SEQUENCE [LARGE SCALE GENOMIC DNA]</scope>
    <source>
        <strain>cv. Columbia</strain>
    </source>
</reference>
<reference key="2">
    <citation type="journal article" date="2017" name="Plant J.">
        <title>Araport11: a complete reannotation of the Arabidopsis thaliana reference genome.</title>
        <authorList>
            <person name="Cheng C.Y."/>
            <person name="Krishnakumar V."/>
            <person name="Chan A.P."/>
            <person name="Thibaud-Nissen F."/>
            <person name="Schobel S."/>
            <person name="Town C.D."/>
        </authorList>
    </citation>
    <scope>GENOME REANNOTATION</scope>
    <source>
        <strain>cv. Columbia</strain>
    </source>
</reference>
<reference key="3">
    <citation type="journal article" date="2003" name="Science">
        <title>Empirical analysis of transcriptional activity in the Arabidopsis genome.</title>
        <authorList>
            <person name="Yamada K."/>
            <person name="Lim J."/>
            <person name="Dale J.M."/>
            <person name="Chen H."/>
            <person name="Shinn P."/>
            <person name="Palm C.J."/>
            <person name="Southwick A.M."/>
            <person name="Wu H.C."/>
            <person name="Kim C.J."/>
            <person name="Nguyen M."/>
            <person name="Pham P.K."/>
            <person name="Cheuk R.F."/>
            <person name="Karlin-Newmann G."/>
            <person name="Liu S.X."/>
            <person name="Lam B."/>
            <person name="Sakano H."/>
            <person name="Wu T."/>
            <person name="Yu G."/>
            <person name="Miranda M."/>
            <person name="Quach H.L."/>
            <person name="Tripp M."/>
            <person name="Chang C.H."/>
            <person name="Lee J.M."/>
            <person name="Toriumi M.J."/>
            <person name="Chan M.M."/>
            <person name="Tang C.C."/>
            <person name="Onodera C.S."/>
            <person name="Deng J.M."/>
            <person name="Akiyama K."/>
            <person name="Ansari Y."/>
            <person name="Arakawa T."/>
            <person name="Banh J."/>
            <person name="Banno F."/>
            <person name="Bowser L."/>
            <person name="Brooks S.Y."/>
            <person name="Carninci P."/>
            <person name="Chao Q."/>
            <person name="Choy N."/>
            <person name="Enju A."/>
            <person name="Goldsmith A.D."/>
            <person name="Gurjal M."/>
            <person name="Hansen N.F."/>
            <person name="Hayashizaki Y."/>
            <person name="Johnson-Hopson C."/>
            <person name="Hsuan V.W."/>
            <person name="Iida K."/>
            <person name="Karnes M."/>
            <person name="Khan S."/>
            <person name="Koesema E."/>
            <person name="Ishida J."/>
            <person name="Jiang P.X."/>
            <person name="Jones T."/>
            <person name="Kawai J."/>
            <person name="Kamiya A."/>
            <person name="Meyers C."/>
            <person name="Nakajima M."/>
            <person name="Narusaka M."/>
            <person name="Seki M."/>
            <person name="Sakurai T."/>
            <person name="Satou M."/>
            <person name="Tamse R."/>
            <person name="Vaysberg M."/>
            <person name="Wallender E.K."/>
            <person name="Wong C."/>
            <person name="Yamamura Y."/>
            <person name="Yuan S."/>
            <person name="Shinozaki K."/>
            <person name="Davis R.W."/>
            <person name="Theologis A."/>
            <person name="Ecker J.R."/>
        </authorList>
    </citation>
    <scope>NUCLEOTIDE SEQUENCE [LARGE SCALE MRNA]</scope>
    <source>
        <strain>cv. Columbia</strain>
    </source>
</reference>
<reference key="4">
    <citation type="submission" date="2005-03" db="EMBL/GenBank/DDBJ databases">
        <title>Large-scale analysis of RIKEN Arabidopsis full-length (RAFL) cDNAs.</title>
        <authorList>
            <person name="Totoki Y."/>
            <person name="Seki M."/>
            <person name="Ishida J."/>
            <person name="Nakajima M."/>
            <person name="Enju A."/>
            <person name="Kamiya A."/>
            <person name="Narusaka M."/>
            <person name="Shin-i T."/>
            <person name="Nakagawa M."/>
            <person name="Sakamoto N."/>
            <person name="Oishi K."/>
            <person name="Kohara Y."/>
            <person name="Kobayashi M."/>
            <person name="Toyoda A."/>
            <person name="Sakaki Y."/>
            <person name="Sakurai T."/>
            <person name="Iida K."/>
            <person name="Akiyama K."/>
            <person name="Satou M."/>
            <person name="Toyoda T."/>
            <person name="Konagaya A."/>
            <person name="Carninci P."/>
            <person name="Kawai J."/>
            <person name="Hayashizaki Y."/>
            <person name="Shinozaki K."/>
        </authorList>
    </citation>
    <scope>NUCLEOTIDE SEQUENCE [LARGE SCALE MRNA] OF 551-687</scope>
    <source>
        <strain>cv. Columbia</strain>
    </source>
</reference>
<reference key="5">
    <citation type="journal article" date="2010" name="Plant Cell">
        <title>Arabidopsis FIMBRIN5, an actin bundling factor, is required for pollen germination and pollen tube growth.</title>
        <authorList>
            <person name="Wu Y."/>
            <person name="Yan J."/>
            <person name="Zhang R."/>
            <person name="Qu X."/>
            <person name="Ren S."/>
            <person name="Chen N."/>
            <person name="Huang S."/>
        </authorList>
    </citation>
    <scope>FUNCTION</scope>
    <scope>DISRUPTION PHENOTYPE</scope>
    <scope>TISSUE SPECIFICITY</scope>
    <scope>INTERACTION WITH F-ACTIN</scope>
</reference>
<name>FIMB5_ARATH</name>
<comment type="function">
    <text evidence="6">Cross-links actin filaments (F-actin) in a calcium independent manner. Induces the formation of actin bundles. Stabilizes and prevents F-actin depolymerization mediated by latrunculin B (LatB).</text>
</comment>
<comment type="subunit">
    <text evidence="6">Interacts with F-actin.</text>
</comment>
<comment type="subcellular location">
    <subcellularLocation>
        <location evidence="1">Cytoplasm</location>
        <location evidence="1">Cytoskeleton</location>
    </subcellularLocation>
</comment>
<comment type="tissue specificity">
    <text evidence="6">Expressed in mature pollen.</text>
</comment>
<comment type="disruption phenotype">
    <text evidence="6">Delayed pollen germination and inhibition of pollen tube growth due to the disorganization and redistribution of actin filaments.</text>
</comment>
<comment type="miscellaneous">
    <text evidence="6">Cross-links actin with a constant of dissociation of 0.71 uM.</text>
</comment>
<proteinExistence type="evidence at protein level"/>
<dbReference type="EMBL" id="AB011485">
    <property type="protein sequence ID" value="BAB09267.1"/>
    <property type="molecule type" value="Genomic_DNA"/>
</dbReference>
<dbReference type="EMBL" id="CP002688">
    <property type="protein sequence ID" value="AED94007.1"/>
    <property type="molecule type" value="Genomic_DNA"/>
</dbReference>
<dbReference type="EMBL" id="AY045780">
    <property type="protein sequence ID" value="AAK76454.1"/>
    <property type="molecule type" value="mRNA"/>
</dbReference>
<dbReference type="EMBL" id="AY142570">
    <property type="protein sequence ID" value="AAN13139.1"/>
    <property type="molecule type" value="mRNA"/>
</dbReference>
<dbReference type="EMBL" id="AK221162">
    <property type="protein sequence ID" value="BAD95202.1"/>
    <property type="molecule type" value="mRNA"/>
</dbReference>
<dbReference type="RefSeq" id="NP_198420.1">
    <property type="nucleotide sequence ID" value="NM_122961.4"/>
</dbReference>
<dbReference type="SMR" id="Q9FKI0"/>
<dbReference type="FunCoup" id="Q9FKI0">
    <property type="interactions" value="2930"/>
</dbReference>
<dbReference type="IntAct" id="Q9FKI0">
    <property type="interactions" value="1"/>
</dbReference>
<dbReference type="STRING" id="3702.Q9FKI0"/>
<dbReference type="PaxDb" id="3702-AT5G35700.1"/>
<dbReference type="ProteomicsDB" id="228924"/>
<dbReference type="EnsemblPlants" id="AT5G35700.1">
    <property type="protein sequence ID" value="AT5G35700.1"/>
    <property type="gene ID" value="AT5G35700"/>
</dbReference>
<dbReference type="GeneID" id="833544"/>
<dbReference type="Gramene" id="AT5G35700.1">
    <property type="protein sequence ID" value="AT5G35700.1"/>
    <property type="gene ID" value="AT5G35700"/>
</dbReference>
<dbReference type="KEGG" id="ath:AT5G35700"/>
<dbReference type="Araport" id="AT5G35700"/>
<dbReference type="TAIR" id="AT5G35700">
    <property type="gene designation" value="FIM5"/>
</dbReference>
<dbReference type="eggNOG" id="KOG0046">
    <property type="taxonomic scope" value="Eukaryota"/>
</dbReference>
<dbReference type="HOGENOM" id="CLU_015284_3_1_1"/>
<dbReference type="InParanoid" id="Q9FKI0"/>
<dbReference type="OMA" id="MAIGCNI"/>
<dbReference type="OrthoDB" id="431378at2759"/>
<dbReference type="PhylomeDB" id="Q9FKI0"/>
<dbReference type="PRO" id="PR:Q9FKI0"/>
<dbReference type="Proteomes" id="UP000006548">
    <property type="component" value="Chromosome 5"/>
</dbReference>
<dbReference type="ExpressionAtlas" id="Q9FKI0">
    <property type="expression patterns" value="baseline and differential"/>
</dbReference>
<dbReference type="GO" id="GO:0005737">
    <property type="term" value="C:cytoplasm"/>
    <property type="evidence" value="ECO:0007669"/>
    <property type="project" value="UniProtKB-KW"/>
</dbReference>
<dbReference type="GO" id="GO:0005856">
    <property type="term" value="C:cytoskeleton"/>
    <property type="evidence" value="ECO:0007669"/>
    <property type="project" value="UniProtKB-SubCell"/>
</dbReference>
<dbReference type="GO" id="GO:0051015">
    <property type="term" value="F:actin filament binding"/>
    <property type="evidence" value="ECO:0000314"/>
    <property type="project" value="TAIR"/>
</dbReference>
<dbReference type="GO" id="GO:0030036">
    <property type="term" value="P:actin cytoskeleton organization"/>
    <property type="evidence" value="ECO:0000315"/>
    <property type="project" value="TAIR"/>
</dbReference>
<dbReference type="GO" id="GO:0051017">
    <property type="term" value="P:actin filament bundle assembly"/>
    <property type="evidence" value="ECO:0000314"/>
    <property type="project" value="TAIR"/>
</dbReference>
<dbReference type="GO" id="GO:0009846">
    <property type="term" value="P:pollen germination"/>
    <property type="evidence" value="ECO:0000315"/>
    <property type="project" value="TAIR"/>
</dbReference>
<dbReference type="GO" id="GO:0009860">
    <property type="term" value="P:pollen tube growth"/>
    <property type="evidence" value="ECO:0000315"/>
    <property type="project" value="TAIR"/>
</dbReference>
<dbReference type="CDD" id="cd21293">
    <property type="entry name" value="CH_AtFIM_like_rpt1"/>
    <property type="match status" value="1"/>
</dbReference>
<dbReference type="CDD" id="cd21296">
    <property type="entry name" value="CH_AtFIM_like_rpt2"/>
    <property type="match status" value="1"/>
</dbReference>
<dbReference type="CDD" id="cd21299">
    <property type="entry name" value="CH_AtFIM_like_rpt3"/>
    <property type="match status" value="1"/>
</dbReference>
<dbReference type="CDD" id="cd21302">
    <property type="entry name" value="CH_AtFIM_like_rpt4"/>
    <property type="match status" value="1"/>
</dbReference>
<dbReference type="FunFam" id="1.10.418.10:FF:000045">
    <property type="entry name" value="Fimbrin-1 isoform A"/>
    <property type="match status" value="1"/>
</dbReference>
<dbReference type="FunFam" id="1.10.418.10:FF:000041">
    <property type="entry name" value="Fimbrin-2 isoform A"/>
    <property type="match status" value="1"/>
</dbReference>
<dbReference type="FunFam" id="1.10.418.10:FF:000031">
    <property type="entry name" value="Fimbrin-2 like"/>
    <property type="match status" value="1"/>
</dbReference>
<dbReference type="FunFam" id="1.10.418.10:FF:000034">
    <property type="entry name" value="Fimbrin-2 like"/>
    <property type="match status" value="1"/>
</dbReference>
<dbReference type="Gene3D" id="1.10.418.10">
    <property type="entry name" value="Calponin-like domain"/>
    <property type="match status" value="4"/>
</dbReference>
<dbReference type="InterPro" id="IPR001589">
    <property type="entry name" value="Actinin_actin-bd_CS"/>
</dbReference>
<dbReference type="InterPro" id="IPR001715">
    <property type="entry name" value="CH_dom"/>
</dbReference>
<dbReference type="InterPro" id="IPR036872">
    <property type="entry name" value="CH_dom_sf"/>
</dbReference>
<dbReference type="InterPro" id="IPR039959">
    <property type="entry name" value="Fimbrin/Plastin"/>
</dbReference>
<dbReference type="PANTHER" id="PTHR19961:SF79">
    <property type="entry name" value="FIMBRIN-5"/>
    <property type="match status" value="1"/>
</dbReference>
<dbReference type="PANTHER" id="PTHR19961">
    <property type="entry name" value="FIMBRIN/PLASTIN"/>
    <property type="match status" value="1"/>
</dbReference>
<dbReference type="Pfam" id="PF00307">
    <property type="entry name" value="CH"/>
    <property type="match status" value="4"/>
</dbReference>
<dbReference type="SMART" id="SM00033">
    <property type="entry name" value="CH"/>
    <property type="match status" value="4"/>
</dbReference>
<dbReference type="SUPFAM" id="SSF47576">
    <property type="entry name" value="Calponin-homology domain, CH-domain"/>
    <property type="match status" value="1"/>
</dbReference>
<dbReference type="PROSITE" id="PS00020">
    <property type="entry name" value="ACTININ_2"/>
    <property type="match status" value="1"/>
</dbReference>
<dbReference type="PROSITE" id="PS50021">
    <property type="entry name" value="CH"/>
    <property type="match status" value="4"/>
</dbReference>
<accession>Q9FKI0</accession>
<accession>Q56Z07</accession>